<gene>
    <name evidence="1" type="primary">hslU</name>
    <name type="ordered locus">FTT_0687c</name>
</gene>
<accession>Q5NGY9</accession>
<dbReference type="EMBL" id="AJ749949">
    <property type="protein sequence ID" value="CAG45320.1"/>
    <property type="molecule type" value="Genomic_DNA"/>
</dbReference>
<dbReference type="RefSeq" id="WP_003015770.1">
    <property type="nucleotide sequence ID" value="NZ_CP010290.1"/>
</dbReference>
<dbReference type="RefSeq" id="YP_169703.1">
    <property type="nucleotide sequence ID" value="NC_006570.2"/>
</dbReference>
<dbReference type="SMR" id="Q5NGY9"/>
<dbReference type="IntAct" id="Q5NGY9">
    <property type="interactions" value="1"/>
</dbReference>
<dbReference type="STRING" id="177416.FTT_0687c"/>
<dbReference type="DNASU" id="3192080"/>
<dbReference type="EnsemblBacteria" id="CAG45320">
    <property type="protein sequence ID" value="CAG45320"/>
    <property type="gene ID" value="FTT_0687c"/>
</dbReference>
<dbReference type="KEGG" id="ftu:FTT_0687c"/>
<dbReference type="eggNOG" id="COG1220">
    <property type="taxonomic scope" value="Bacteria"/>
</dbReference>
<dbReference type="OrthoDB" id="9804062at2"/>
<dbReference type="Proteomes" id="UP000001174">
    <property type="component" value="Chromosome"/>
</dbReference>
<dbReference type="GO" id="GO:0009376">
    <property type="term" value="C:HslUV protease complex"/>
    <property type="evidence" value="ECO:0007669"/>
    <property type="project" value="UniProtKB-UniRule"/>
</dbReference>
<dbReference type="GO" id="GO:0005524">
    <property type="term" value="F:ATP binding"/>
    <property type="evidence" value="ECO:0007669"/>
    <property type="project" value="UniProtKB-UniRule"/>
</dbReference>
<dbReference type="GO" id="GO:0016887">
    <property type="term" value="F:ATP hydrolysis activity"/>
    <property type="evidence" value="ECO:0007669"/>
    <property type="project" value="InterPro"/>
</dbReference>
<dbReference type="GO" id="GO:0008233">
    <property type="term" value="F:peptidase activity"/>
    <property type="evidence" value="ECO:0007669"/>
    <property type="project" value="InterPro"/>
</dbReference>
<dbReference type="GO" id="GO:0036402">
    <property type="term" value="F:proteasome-activating activity"/>
    <property type="evidence" value="ECO:0007669"/>
    <property type="project" value="UniProtKB-UniRule"/>
</dbReference>
<dbReference type="GO" id="GO:0043335">
    <property type="term" value="P:protein unfolding"/>
    <property type="evidence" value="ECO:0007669"/>
    <property type="project" value="UniProtKB-UniRule"/>
</dbReference>
<dbReference type="GO" id="GO:0051603">
    <property type="term" value="P:proteolysis involved in protein catabolic process"/>
    <property type="evidence" value="ECO:0007669"/>
    <property type="project" value="TreeGrafter"/>
</dbReference>
<dbReference type="CDD" id="cd19498">
    <property type="entry name" value="RecA-like_HslU"/>
    <property type="match status" value="1"/>
</dbReference>
<dbReference type="FunFam" id="3.40.50.300:FF:000213">
    <property type="entry name" value="ATP-dependent protease ATPase subunit HslU"/>
    <property type="match status" value="1"/>
</dbReference>
<dbReference type="FunFam" id="3.40.50.300:FF:000220">
    <property type="entry name" value="ATP-dependent protease ATPase subunit HslU"/>
    <property type="match status" value="1"/>
</dbReference>
<dbReference type="Gene3D" id="1.10.8.60">
    <property type="match status" value="1"/>
</dbReference>
<dbReference type="Gene3D" id="3.40.50.300">
    <property type="entry name" value="P-loop containing nucleotide triphosphate hydrolases"/>
    <property type="match status" value="2"/>
</dbReference>
<dbReference type="HAMAP" id="MF_00249">
    <property type="entry name" value="HslU"/>
    <property type="match status" value="1"/>
</dbReference>
<dbReference type="InterPro" id="IPR003593">
    <property type="entry name" value="AAA+_ATPase"/>
</dbReference>
<dbReference type="InterPro" id="IPR050052">
    <property type="entry name" value="ATP-dep_Clp_protease_ClpX"/>
</dbReference>
<dbReference type="InterPro" id="IPR003959">
    <property type="entry name" value="ATPase_AAA_core"/>
</dbReference>
<dbReference type="InterPro" id="IPR019489">
    <property type="entry name" value="Clp_ATPase_C"/>
</dbReference>
<dbReference type="InterPro" id="IPR004491">
    <property type="entry name" value="HslU"/>
</dbReference>
<dbReference type="InterPro" id="IPR027417">
    <property type="entry name" value="P-loop_NTPase"/>
</dbReference>
<dbReference type="NCBIfam" id="TIGR00390">
    <property type="entry name" value="hslU"/>
    <property type="match status" value="1"/>
</dbReference>
<dbReference type="NCBIfam" id="NF003544">
    <property type="entry name" value="PRK05201.1"/>
    <property type="match status" value="1"/>
</dbReference>
<dbReference type="PANTHER" id="PTHR48102">
    <property type="entry name" value="ATP-DEPENDENT CLP PROTEASE ATP-BINDING SUBUNIT CLPX-LIKE, MITOCHONDRIAL-RELATED"/>
    <property type="match status" value="1"/>
</dbReference>
<dbReference type="PANTHER" id="PTHR48102:SF3">
    <property type="entry name" value="ATP-DEPENDENT PROTEASE ATPASE SUBUNIT HSLU"/>
    <property type="match status" value="1"/>
</dbReference>
<dbReference type="Pfam" id="PF00004">
    <property type="entry name" value="AAA"/>
    <property type="match status" value="1"/>
</dbReference>
<dbReference type="Pfam" id="PF07724">
    <property type="entry name" value="AAA_2"/>
    <property type="match status" value="1"/>
</dbReference>
<dbReference type="SMART" id="SM00382">
    <property type="entry name" value="AAA"/>
    <property type="match status" value="1"/>
</dbReference>
<dbReference type="SMART" id="SM01086">
    <property type="entry name" value="ClpB_D2-small"/>
    <property type="match status" value="1"/>
</dbReference>
<dbReference type="SUPFAM" id="SSF52540">
    <property type="entry name" value="P-loop containing nucleoside triphosphate hydrolases"/>
    <property type="match status" value="1"/>
</dbReference>
<evidence type="ECO:0000255" key="1">
    <source>
        <dbReference type="HAMAP-Rule" id="MF_00249"/>
    </source>
</evidence>
<evidence type="ECO:0000256" key="2">
    <source>
        <dbReference type="SAM" id="MobiDB-lite"/>
    </source>
</evidence>
<reference key="1">
    <citation type="journal article" date="2005" name="Nat. Genet.">
        <title>The complete genome sequence of Francisella tularensis, the causative agent of tularemia.</title>
        <authorList>
            <person name="Larsson P."/>
            <person name="Oyston P.C.F."/>
            <person name="Chain P."/>
            <person name="Chu M.C."/>
            <person name="Duffield M."/>
            <person name="Fuxelius H.-H."/>
            <person name="Garcia E."/>
            <person name="Haelltorp G."/>
            <person name="Johansson D."/>
            <person name="Isherwood K.E."/>
            <person name="Karp P.D."/>
            <person name="Larsson E."/>
            <person name="Liu Y."/>
            <person name="Michell S."/>
            <person name="Prior J."/>
            <person name="Prior R."/>
            <person name="Malfatti S."/>
            <person name="Sjoestedt A."/>
            <person name="Svensson K."/>
            <person name="Thompson N."/>
            <person name="Vergez L."/>
            <person name="Wagg J.K."/>
            <person name="Wren B.W."/>
            <person name="Lindler L.E."/>
            <person name="Andersson S.G.E."/>
            <person name="Forsman M."/>
            <person name="Titball R.W."/>
        </authorList>
    </citation>
    <scope>NUCLEOTIDE SEQUENCE [LARGE SCALE GENOMIC DNA]</scope>
    <source>
        <strain>SCHU S4 / Schu 4</strain>
    </source>
</reference>
<protein>
    <recommendedName>
        <fullName evidence="1">ATP-dependent protease ATPase subunit HslU</fullName>
    </recommendedName>
    <alternativeName>
        <fullName evidence="1">Unfoldase HslU</fullName>
    </alternativeName>
</protein>
<feature type="chain" id="PRO_0000160505" description="ATP-dependent protease ATPase subunit HslU">
    <location>
        <begin position="1"/>
        <end position="455"/>
    </location>
</feature>
<feature type="region of interest" description="Disordered" evidence="2">
    <location>
        <begin position="144"/>
        <end position="163"/>
    </location>
</feature>
<feature type="binding site" evidence="1">
    <location>
        <position position="19"/>
    </location>
    <ligand>
        <name>ATP</name>
        <dbReference type="ChEBI" id="CHEBI:30616"/>
    </ligand>
</feature>
<feature type="binding site" evidence="1">
    <location>
        <begin position="61"/>
        <end position="66"/>
    </location>
    <ligand>
        <name>ATP</name>
        <dbReference type="ChEBI" id="CHEBI:30616"/>
    </ligand>
</feature>
<feature type="binding site" evidence="1">
    <location>
        <position position="268"/>
    </location>
    <ligand>
        <name>ATP</name>
        <dbReference type="ChEBI" id="CHEBI:30616"/>
    </ligand>
</feature>
<feature type="binding site" evidence="1">
    <location>
        <position position="333"/>
    </location>
    <ligand>
        <name>ATP</name>
        <dbReference type="ChEBI" id="CHEBI:30616"/>
    </ligand>
</feature>
<feature type="binding site" evidence="1">
    <location>
        <position position="405"/>
    </location>
    <ligand>
        <name>ATP</name>
        <dbReference type="ChEBI" id="CHEBI:30616"/>
    </ligand>
</feature>
<proteinExistence type="inferred from homology"/>
<sequence>MTQIMTPKTIVHELERHIIGQNDAKKAVAIALRNRWRRMQLDNEMRQEVTPKNILMIGPTGVGKTEIARRLAKLADAPFIKVEATKFTEVGYVGKDVESIIRDLVETAVKMKREEAKEKVTEKAARLAEDRILDVLIPPARTSESKVGFANEPAEDAASKKEKENKTREIFRKKIQNGELDDKEIEIEVAVAPKTIGVMGPPGMEDMTSQLQDLFSSLSTDKKKNKKMRIKDAIKLAQDEEAAKLVNEEDIKARALEAVEQNGIVFLDEIDKVCRKSSNSGADVSREGVQRDLLPLVEGSTVSTKYGVIKTDHILFIASGAFHVAKPSDLIPELQGRLPIRVELKSLEIEDFVRILREPDCSILKQYIALMKTEGIDLSFEEDAIRKIAEIAYKVNEEVENIGARRLHTVMERLLEKISFDAPELVEKNINITTDYVNEKLGNLVKNKDLSQYIL</sequence>
<organism>
    <name type="scientific">Francisella tularensis subsp. tularensis (strain SCHU S4 / Schu 4)</name>
    <dbReference type="NCBI Taxonomy" id="177416"/>
    <lineage>
        <taxon>Bacteria</taxon>
        <taxon>Pseudomonadati</taxon>
        <taxon>Pseudomonadota</taxon>
        <taxon>Gammaproteobacteria</taxon>
        <taxon>Thiotrichales</taxon>
        <taxon>Francisellaceae</taxon>
        <taxon>Francisella</taxon>
    </lineage>
</organism>
<name>HSLU_FRATT</name>
<keyword id="KW-0067">ATP-binding</keyword>
<keyword id="KW-0143">Chaperone</keyword>
<keyword id="KW-0963">Cytoplasm</keyword>
<keyword id="KW-0547">Nucleotide-binding</keyword>
<keyword id="KW-1185">Reference proteome</keyword>
<comment type="function">
    <text evidence="1">ATPase subunit of a proteasome-like degradation complex; this subunit has chaperone activity. The binding of ATP and its subsequent hydrolysis by HslU are essential for unfolding of protein substrates subsequently hydrolyzed by HslV. HslU recognizes the N-terminal part of its protein substrates and unfolds these before they are guided to HslV for hydrolysis.</text>
</comment>
<comment type="subunit">
    <text evidence="1">A double ring-shaped homohexamer of HslV is capped on each side by a ring-shaped HslU homohexamer. The assembly of the HslU/HslV complex is dependent on binding of ATP.</text>
</comment>
<comment type="subcellular location">
    <subcellularLocation>
        <location evidence="1">Cytoplasm</location>
    </subcellularLocation>
</comment>
<comment type="similarity">
    <text evidence="1">Belongs to the ClpX chaperone family. HslU subfamily.</text>
</comment>